<proteinExistence type="inferred from homology"/>
<reference key="1">
    <citation type="journal article" date="2009" name="Infect. Immun.">
        <title>Comparative genomics reveal extensive transposon-mediated genomic plasticity and diversity among potential effector proteins within the genus Coxiella.</title>
        <authorList>
            <person name="Beare P.A."/>
            <person name="Unsworth N."/>
            <person name="Andoh M."/>
            <person name="Voth D.E."/>
            <person name="Omsland A."/>
            <person name="Gilk S.D."/>
            <person name="Williams K.P."/>
            <person name="Sobral B.W."/>
            <person name="Kupko J.J. III"/>
            <person name="Porcella S.F."/>
            <person name="Samuel J.E."/>
            <person name="Heinzen R.A."/>
        </authorList>
    </citation>
    <scope>NUCLEOTIDE SEQUENCE [LARGE SCALE GENOMIC DNA]</scope>
    <source>
        <strain>Dugway 5J108-111</strain>
    </source>
</reference>
<organism>
    <name type="scientific">Coxiella burnetii (strain Dugway 5J108-111)</name>
    <dbReference type="NCBI Taxonomy" id="434922"/>
    <lineage>
        <taxon>Bacteria</taxon>
        <taxon>Pseudomonadati</taxon>
        <taxon>Pseudomonadota</taxon>
        <taxon>Gammaproteobacteria</taxon>
        <taxon>Legionellales</taxon>
        <taxon>Coxiellaceae</taxon>
        <taxon>Coxiella</taxon>
    </lineage>
</organism>
<keyword id="KW-0067">ATP-binding</keyword>
<keyword id="KW-0131">Cell cycle</keyword>
<keyword id="KW-0132">Cell division</keyword>
<keyword id="KW-0133">Cell shape</keyword>
<keyword id="KW-0961">Cell wall biogenesis/degradation</keyword>
<keyword id="KW-0963">Cytoplasm</keyword>
<keyword id="KW-0436">Ligase</keyword>
<keyword id="KW-0547">Nucleotide-binding</keyword>
<keyword id="KW-0573">Peptidoglycan synthesis</keyword>
<gene>
    <name evidence="1" type="primary">murC</name>
    <name type="ordered locus">CBUD_1971</name>
</gene>
<accession>A9KER2</accession>
<protein>
    <recommendedName>
        <fullName evidence="1">UDP-N-acetylmuramate--L-alanine ligase</fullName>
        <ecNumber evidence="1">6.3.2.8</ecNumber>
    </recommendedName>
    <alternativeName>
        <fullName evidence="1">UDP-N-acetylmuramoyl-L-alanine synthetase</fullName>
    </alternativeName>
</protein>
<feature type="chain" id="PRO_1000074735" description="UDP-N-acetylmuramate--L-alanine ligase">
    <location>
        <begin position="1"/>
        <end position="465"/>
    </location>
</feature>
<feature type="binding site" evidence="1">
    <location>
        <begin position="115"/>
        <end position="121"/>
    </location>
    <ligand>
        <name>ATP</name>
        <dbReference type="ChEBI" id="CHEBI:30616"/>
    </ligand>
</feature>
<comment type="function">
    <text evidence="1">Cell wall formation.</text>
</comment>
<comment type="catalytic activity">
    <reaction evidence="1">
        <text>UDP-N-acetyl-alpha-D-muramate + L-alanine + ATP = UDP-N-acetyl-alpha-D-muramoyl-L-alanine + ADP + phosphate + H(+)</text>
        <dbReference type="Rhea" id="RHEA:23372"/>
        <dbReference type="ChEBI" id="CHEBI:15378"/>
        <dbReference type="ChEBI" id="CHEBI:30616"/>
        <dbReference type="ChEBI" id="CHEBI:43474"/>
        <dbReference type="ChEBI" id="CHEBI:57972"/>
        <dbReference type="ChEBI" id="CHEBI:70757"/>
        <dbReference type="ChEBI" id="CHEBI:83898"/>
        <dbReference type="ChEBI" id="CHEBI:456216"/>
        <dbReference type="EC" id="6.3.2.8"/>
    </reaction>
</comment>
<comment type="pathway">
    <text evidence="1">Cell wall biogenesis; peptidoglycan biosynthesis.</text>
</comment>
<comment type="subcellular location">
    <subcellularLocation>
        <location evidence="1">Cytoplasm</location>
    </subcellularLocation>
</comment>
<comment type="similarity">
    <text evidence="1">Belongs to the MurCDEF family.</text>
</comment>
<dbReference type="EC" id="6.3.2.8" evidence="1"/>
<dbReference type="EMBL" id="CP000733">
    <property type="protein sequence ID" value="ABS77782.1"/>
    <property type="molecule type" value="Genomic_DNA"/>
</dbReference>
<dbReference type="RefSeq" id="WP_010957397.1">
    <property type="nucleotide sequence ID" value="NC_009727.1"/>
</dbReference>
<dbReference type="SMR" id="A9KER2"/>
<dbReference type="KEGG" id="cbd:CBUD_1971"/>
<dbReference type="HOGENOM" id="CLU_028104_2_2_6"/>
<dbReference type="UniPathway" id="UPA00219"/>
<dbReference type="Proteomes" id="UP000008555">
    <property type="component" value="Chromosome"/>
</dbReference>
<dbReference type="GO" id="GO:0005737">
    <property type="term" value="C:cytoplasm"/>
    <property type="evidence" value="ECO:0007669"/>
    <property type="project" value="UniProtKB-SubCell"/>
</dbReference>
<dbReference type="GO" id="GO:0005524">
    <property type="term" value="F:ATP binding"/>
    <property type="evidence" value="ECO:0007669"/>
    <property type="project" value="UniProtKB-UniRule"/>
</dbReference>
<dbReference type="GO" id="GO:0008763">
    <property type="term" value="F:UDP-N-acetylmuramate-L-alanine ligase activity"/>
    <property type="evidence" value="ECO:0007669"/>
    <property type="project" value="UniProtKB-UniRule"/>
</dbReference>
<dbReference type="GO" id="GO:0051301">
    <property type="term" value="P:cell division"/>
    <property type="evidence" value="ECO:0007669"/>
    <property type="project" value="UniProtKB-KW"/>
</dbReference>
<dbReference type="GO" id="GO:0071555">
    <property type="term" value="P:cell wall organization"/>
    <property type="evidence" value="ECO:0007669"/>
    <property type="project" value="UniProtKB-KW"/>
</dbReference>
<dbReference type="GO" id="GO:0009252">
    <property type="term" value="P:peptidoglycan biosynthetic process"/>
    <property type="evidence" value="ECO:0007669"/>
    <property type="project" value="UniProtKB-UniRule"/>
</dbReference>
<dbReference type="GO" id="GO:0008360">
    <property type="term" value="P:regulation of cell shape"/>
    <property type="evidence" value="ECO:0007669"/>
    <property type="project" value="UniProtKB-KW"/>
</dbReference>
<dbReference type="Gene3D" id="3.90.190.20">
    <property type="entry name" value="Mur ligase, C-terminal domain"/>
    <property type="match status" value="1"/>
</dbReference>
<dbReference type="Gene3D" id="3.40.1190.10">
    <property type="entry name" value="Mur-like, catalytic domain"/>
    <property type="match status" value="1"/>
</dbReference>
<dbReference type="Gene3D" id="3.40.50.720">
    <property type="entry name" value="NAD(P)-binding Rossmann-like Domain"/>
    <property type="match status" value="1"/>
</dbReference>
<dbReference type="HAMAP" id="MF_00046">
    <property type="entry name" value="MurC"/>
    <property type="match status" value="1"/>
</dbReference>
<dbReference type="InterPro" id="IPR036565">
    <property type="entry name" value="Mur-like_cat_sf"/>
</dbReference>
<dbReference type="InterPro" id="IPR004101">
    <property type="entry name" value="Mur_ligase_C"/>
</dbReference>
<dbReference type="InterPro" id="IPR036615">
    <property type="entry name" value="Mur_ligase_C_dom_sf"/>
</dbReference>
<dbReference type="InterPro" id="IPR013221">
    <property type="entry name" value="Mur_ligase_cen"/>
</dbReference>
<dbReference type="InterPro" id="IPR000713">
    <property type="entry name" value="Mur_ligase_N"/>
</dbReference>
<dbReference type="InterPro" id="IPR050061">
    <property type="entry name" value="MurCDEF_pg_biosynth"/>
</dbReference>
<dbReference type="InterPro" id="IPR005758">
    <property type="entry name" value="UDP-N-AcMur_Ala_ligase_MurC"/>
</dbReference>
<dbReference type="NCBIfam" id="TIGR01082">
    <property type="entry name" value="murC"/>
    <property type="match status" value="1"/>
</dbReference>
<dbReference type="PANTHER" id="PTHR43445:SF3">
    <property type="entry name" value="UDP-N-ACETYLMURAMATE--L-ALANINE LIGASE"/>
    <property type="match status" value="1"/>
</dbReference>
<dbReference type="PANTHER" id="PTHR43445">
    <property type="entry name" value="UDP-N-ACETYLMURAMATE--L-ALANINE LIGASE-RELATED"/>
    <property type="match status" value="1"/>
</dbReference>
<dbReference type="Pfam" id="PF01225">
    <property type="entry name" value="Mur_ligase"/>
    <property type="match status" value="1"/>
</dbReference>
<dbReference type="Pfam" id="PF02875">
    <property type="entry name" value="Mur_ligase_C"/>
    <property type="match status" value="1"/>
</dbReference>
<dbReference type="Pfam" id="PF08245">
    <property type="entry name" value="Mur_ligase_M"/>
    <property type="match status" value="1"/>
</dbReference>
<dbReference type="SUPFAM" id="SSF51984">
    <property type="entry name" value="MurCD N-terminal domain"/>
    <property type="match status" value="1"/>
</dbReference>
<dbReference type="SUPFAM" id="SSF53623">
    <property type="entry name" value="MurD-like peptide ligases, catalytic domain"/>
    <property type="match status" value="1"/>
</dbReference>
<dbReference type="SUPFAM" id="SSF53244">
    <property type="entry name" value="MurD-like peptide ligases, peptide-binding domain"/>
    <property type="match status" value="1"/>
</dbReference>
<name>MURC_COXBN</name>
<evidence type="ECO:0000255" key="1">
    <source>
        <dbReference type="HAMAP-Rule" id="MF_00046"/>
    </source>
</evidence>
<sequence>MQLDKKIINHVHCLGIGGIGVSALAEILLKKGCRVTGSDVSPNKNTERLQRLGAEIIFNHDGTAITQADCAVYSSAIGATNPELMAAKQAKIPLLKRGEMLANLMKEYQSIAVAGAHGKTTTSGMLSHAFVEANLDPTFMVGGVLNNSQTPARVGNGHYFIAEADESDASFLFMHPDIAVVTNIDADHLSTYDGDFNRLKQTYIQFLEQTAQDGVVVLCLDDPILREIAPLLSRRVITYGFSSDAQYRVVDYCQQGIQSLFQIHSPQRKAPLTVKLSMPGQHNALNATAVTAIADVVQMNEPALLKSLADFPGVDRRFTIRGEMILPKGNALIIEDYGHHPNEIKATLAAARAAWPERRMVLVFQPHRYSRTRDLMTEFVSVLAETDWLVLLEVYSAGEMPIPGADGMALIKMMSNGMAQKTTFVPLLQNLPETLQKLSQPNDIIILQGAGNIGSIVTALVQTHG</sequence>